<sequence>MRNINTYDWMKKWMTRSISILVMIHMITRTSISNAYPIFAQQGYENPREATGRIVCANCHLAKKPVNIEVPQSVLPDTVFEAVVQIPCDMQIKQVLANGKKGALNVGAVLILPEGFELAPPDRISPEIKEKIGNLYFQNYRPNQKEILVIGPVPGQKYSEIVFPILSPNPATNKEVHFLKYPIYVGGNRGRGQIYPDGSKSNNTVYNASTTGRVSKILRKEKGGYEITIDNASDGRQVVDIVPPGPELLISEGEFIKVDQPLTNNPNVGGFGQGDAEIVLQDPLRVQGLLLLLASVILAQIFLVLKKKQFEKVQLAEMNF</sequence>
<protein>
    <recommendedName>
        <fullName evidence="2">Cytochrome f</fullName>
    </recommendedName>
</protein>
<feature type="signal peptide" evidence="2">
    <location>
        <begin position="1"/>
        <end position="35"/>
    </location>
</feature>
<feature type="chain" id="PRO_0000342060" description="Cytochrome f">
    <location>
        <begin position="36"/>
        <end position="320"/>
    </location>
</feature>
<feature type="transmembrane region" description="Helical" evidence="2">
    <location>
        <begin position="286"/>
        <end position="306"/>
    </location>
</feature>
<feature type="binding site" description="axial binding residue" evidence="2">
    <location>
        <position position="36"/>
    </location>
    <ligand>
        <name>heme</name>
        <dbReference type="ChEBI" id="CHEBI:30413"/>
    </ligand>
    <ligandPart>
        <name>Fe</name>
        <dbReference type="ChEBI" id="CHEBI:18248"/>
    </ligandPart>
</feature>
<feature type="binding site" description="covalent" evidence="2">
    <location>
        <position position="56"/>
    </location>
    <ligand>
        <name>heme</name>
        <dbReference type="ChEBI" id="CHEBI:30413"/>
    </ligand>
</feature>
<feature type="binding site" description="covalent" evidence="2">
    <location>
        <position position="59"/>
    </location>
    <ligand>
        <name>heme</name>
        <dbReference type="ChEBI" id="CHEBI:30413"/>
    </ligand>
</feature>
<feature type="binding site" description="axial binding residue" evidence="2">
    <location>
        <position position="60"/>
    </location>
    <ligand>
        <name>heme</name>
        <dbReference type="ChEBI" id="CHEBI:30413"/>
    </ligand>
    <ligandPart>
        <name>Fe</name>
        <dbReference type="ChEBI" id="CHEBI:18248"/>
    </ligandPart>
</feature>
<proteinExistence type="inferred from homology"/>
<dbReference type="EMBL" id="AP009339">
    <property type="protein sequence ID" value="BAF64957.1"/>
    <property type="molecule type" value="Genomic_DNA"/>
</dbReference>
<dbReference type="RefSeq" id="YP_001312216.1">
    <property type="nucleotide sequence ID" value="NC_009618.1"/>
</dbReference>
<dbReference type="SMR" id="A6H5J1"/>
<dbReference type="GeneID" id="5309561"/>
<dbReference type="GO" id="GO:0009535">
    <property type="term" value="C:chloroplast thylakoid membrane"/>
    <property type="evidence" value="ECO:0007669"/>
    <property type="project" value="UniProtKB-SubCell"/>
</dbReference>
<dbReference type="GO" id="GO:0009055">
    <property type="term" value="F:electron transfer activity"/>
    <property type="evidence" value="ECO:0007669"/>
    <property type="project" value="UniProtKB-UniRule"/>
</dbReference>
<dbReference type="GO" id="GO:0020037">
    <property type="term" value="F:heme binding"/>
    <property type="evidence" value="ECO:0007669"/>
    <property type="project" value="InterPro"/>
</dbReference>
<dbReference type="GO" id="GO:0005506">
    <property type="term" value="F:iron ion binding"/>
    <property type="evidence" value="ECO:0007669"/>
    <property type="project" value="InterPro"/>
</dbReference>
<dbReference type="GO" id="GO:0015979">
    <property type="term" value="P:photosynthesis"/>
    <property type="evidence" value="ECO:0007669"/>
    <property type="project" value="UniProtKB-UniRule"/>
</dbReference>
<dbReference type="FunFam" id="1.20.5.700:FF:000001">
    <property type="entry name" value="Cytochrome f"/>
    <property type="match status" value="1"/>
</dbReference>
<dbReference type="FunFam" id="2.40.50.100:FF:000007">
    <property type="entry name" value="Cytochrome f"/>
    <property type="match status" value="1"/>
</dbReference>
<dbReference type="FunFam" id="2.60.40.830:FF:000001">
    <property type="entry name" value="Cytochrome f"/>
    <property type="match status" value="1"/>
</dbReference>
<dbReference type="Gene3D" id="2.40.50.100">
    <property type="match status" value="1"/>
</dbReference>
<dbReference type="Gene3D" id="2.60.40.830">
    <property type="entry name" value="Cytochrome f large domain"/>
    <property type="match status" value="1"/>
</dbReference>
<dbReference type="Gene3D" id="1.20.5.700">
    <property type="entry name" value="Single helix bin"/>
    <property type="match status" value="1"/>
</dbReference>
<dbReference type="HAMAP" id="MF_00610">
    <property type="entry name" value="Cytb6_f_cytF"/>
    <property type="match status" value="1"/>
</dbReference>
<dbReference type="InterPro" id="IPR024058">
    <property type="entry name" value="Cyt-f_TM"/>
</dbReference>
<dbReference type="InterPro" id="IPR002325">
    <property type="entry name" value="Cyt_f"/>
</dbReference>
<dbReference type="InterPro" id="IPR024094">
    <property type="entry name" value="Cyt_f_lg_dom"/>
</dbReference>
<dbReference type="InterPro" id="IPR036826">
    <property type="entry name" value="Cyt_f_lg_dom_sf"/>
</dbReference>
<dbReference type="InterPro" id="IPR011054">
    <property type="entry name" value="Rudment_hybrid_motif"/>
</dbReference>
<dbReference type="PANTHER" id="PTHR33288">
    <property type="match status" value="1"/>
</dbReference>
<dbReference type="PANTHER" id="PTHR33288:SF10">
    <property type="entry name" value="CYTOCHROME F"/>
    <property type="match status" value="1"/>
</dbReference>
<dbReference type="Pfam" id="PF01333">
    <property type="entry name" value="Apocytochr_F_C"/>
    <property type="match status" value="1"/>
</dbReference>
<dbReference type="Pfam" id="PF16639">
    <property type="entry name" value="Apocytochr_F_N"/>
    <property type="match status" value="1"/>
</dbReference>
<dbReference type="PRINTS" id="PR00610">
    <property type="entry name" value="CYTOCHROMEF"/>
</dbReference>
<dbReference type="SUPFAM" id="SSF103431">
    <property type="entry name" value="Cytochrome f subunit of the cytochrome b6f complex, transmembrane anchor"/>
    <property type="match status" value="1"/>
</dbReference>
<dbReference type="SUPFAM" id="SSF49441">
    <property type="entry name" value="Cytochrome f, large domain"/>
    <property type="match status" value="1"/>
</dbReference>
<dbReference type="SUPFAM" id="SSF51246">
    <property type="entry name" value="Rudiment single hybrid motif"/>
    <property type="match status" value="1"/>
</dbReference>
<dbReference type="PROSITE" id="PS51010">
    <property type="entry name" value="CYTF"/>
    <property type="match status" value="1"/>
</dbReference>
<comment type="function">
    <text evidence="2">Component of the cytochrome b6-f complex, which mediates electron transfer between photosystem II (PSII) and photosystem I (PSI), cyclic electron flow around PSI, and state transitions.</text>
</comment>
<comment type="cofactor">
    <cofactor evidence="2">
        <name>heme</name>
        <dbReference type="ChEBI" id="CHEBI:30413"/>
    </cofactor>
    <text evidence="2">Binds 1 heme group covalently.</text>
</comment>
<comment type="subunit">
    <text evidence="1">The 4 large subunits of the cytochrome b6-f complex are cytochrome b6, subunit IV (17 kDa polypeptide, petD), cytochrome f and the Rieske protein, while the 4 small subunits are PetG, PetL, PetM and PetN. The complex functions as a dimer (By similarity).</text>
</comment>
<comment type="subcellular location">
    <subcellularLocation>
        <location evidence="2">Plastid</location>
        <location evidence="2">Chloroplast thylakoid membrane</location>
        <topology evidence="2">Single-pass membrane protein</topology>
    </subcellularLocation>
</comment>
<comment type="similarity">
    <text evidence="2">Belongs to the cytochrome f family.</text>
</comment>
<reference key="1">
    <citation type="journal article" date="2007" name="Mol. Biol. Evol.">
        <title>Chloroplast genome (cpDNA) of Cycas taitungensis and 56 cp protein-coding genes of Gnetum parvifolium: insights into cpDNA evolution and phylogeny of extant seed plants.</title>
        <authorList>
            <person name="Wu C.-S."/>
            <person name="Wang Y.-N."/>
            <person name="Liu S.-M."/>
            <person name="Chaw S.-M."/>
        </authorList>
    </citation>
    <scope>NUCLEOTIDE SEQUENCE [LARGE SCALE GENOMIC DNA]</scope>
</reference>
<gene>
    <name evidence="2" type="primary">petA</name>
</gene>
<evidence type="ECO:0000250" key="1"/>
<evidence type="ECO:0000255" key="2">
    <source>
        <dbReference type="HAMAP-Rule" id="MF_00610"/>
    </source>
</evidence>
<accession>A6H5J1</accession>
<name>CYF_CYCTA</name>
<keyword id="KW-0150">Chloroplast</keyword>
<keyword id="KW-0249">Electron transport</keyword>
<keyword id="KW-0349">Heme</keyword>
<keyword id="KW-0408">Iron</keyword>
<keyword id="KW-0472">Membrane</keyword>
<keyword id="KW-0479">Metal-binding</keyword>
<keyword id="KW-0602">Photosynthesis</keyword>
<keyword id="KW-0934">Plastid</keyword>
<keyword id="KW-0732">Signal</keyword>
<keyword id="KW-0793">Thylakoid</keyword>
<keyword id="KW-0812">Transmembrane</keyword>
<keyword id="KW-1133">Transmembrane helix</keyword>
<keyword id="KW-0813">Transport</keyword>
<organism>
    <name type="scientific">Cycas taitungensis</name>
    <name type="common">Prince sago</name>
    <name type="synonym">Cycas taiwaniana</name>
    <dbReference type="NCBI Taxonomy" id="54799"/>
    <lineage>
        <taxon>Eukaryota</taxon>
        <taxon>Viridiplantae</taxon>
        <taxon>Streptophyta</taxon>
        <taxon>Embryophyta</taxon>
        <taxon>Tracheophyta</taxon>
        <taxon>Spermatophyta</taxon>
        <taxon>Cycadidae</taxon>
        <taxon>Cycadales</taxon>
        <taxon>Cycadaceae</taxon>
        <taxon>Cycas</taxon>
    </lineage>
</organism>
<geneLocation type="chloroplast"/>